<keyword id="KW-0997">Cell inner membrane</keyword>
<keyword id="KW-1003">Cell membrane</keyword>
<keyword id="KW-0285">Flavoprotein</keyword>
<keyword id="KW-0288">FMN</keyword>
<keyword id="KW-0472">Membrane</keyword>
<keyword id="KW-0560">Oxidoreductase</keyword>
<keyword id="KW-1185">Reference proteome</keyword>
<reference key="1">
    <citation type="journal article" date="1993" name="J. Bacteriol.">
        <title>Three overlapping lct genes involved in L-lactate utilization by Escherichia coli.</title>
        <authorList>
            <person name="Dong J.M."/>
            <person name="Taylor J.S."/>
            <person name="Latour D.J."/>
            <person name="Iuchi S."/>
            <person name="Lin E.C.C."/>
        </authorList>
    </citation>
    <scope>NUCLEOTIDE SEQUENCE [GENOMIC DNA]</scope>
    <scope>FUNCTION</scope>
    <scope>INDUCTION</scope>
    <scope>DISRUPTION PHENOTYPE</scope>
    <source>
        <strain>K12</strain>
    </source>
</reference>
<reference key="2">
    <citation type="journal article" date="1994" name="Nucleic Acids Res.">
        <title>Analysis of the Escherichia coli genome. V. DNA sequence of the region from 76.0 to 81.5 minutes.</title>
        <authorList>
            <person name="Sofia H.J."/>
            <person name="Burland V."/>
            <person name="Daniels D.L."/>
            <person name="Plunkett G. III"/>
            <person name="Blattner F.R."/>
        </authorList>
    </citation>
    <scope>NUCLEOTIDE SEQUENCE [LARGE SCALE GENOMIC DNA]</scope>
    <source>
        <strain>K12 / MG1655 / ATCC 47076</strain>
    </source>
</reference>
<reference key="3">
    <citation type="journal article" date="1997" name="Science">
        <title>The complete genome sequence of Escherichia coli K-12.</title>
        <authorList>
            <person name="Blattner F.R."/>
            <person name="Plunkett G. III"/>
            <person name="Bloch C.A."/>
            <person name="Perna N.T."/>
            <person name="Burland V."/>
            <person name="Riley M."/>
            <person name="Collado-Vides J."/>
            <person name="Glasner J.D."/>
            <person name="Rode C.K."/>
            <person name="Mayhew G.F."/>
            <person name="Gregor J."/>
            <person name="Davis N.W."/>
            <person name="Kirkpatrick H.A."/>
            <person name="Goeden M.A."/>
            <person name="Rose D.J."/>
            <person name="Mau B."/>
            <person name="Shao Y."/>
        </authorList>
    </citation>
    <scope>NUCLEOTIDE SEQUENCE [LARGE SCALE GENOMIC DNA]</scope>
    <source>
        <strain>K12 / MG1655 / ATCC 47076</strain>
    </source>
</reference>
<reference key="4">
    <citation type="journal article" date="2006" name="Mol. Syst. Biol.">
        <title>Highly accurate genome sequences of Escherichia coli K-12 strains MG1655 and W3110.</title>
        <authorList>
            <person name="Hayashi K."/>
            <person name="Morooka N."/>
            <person name="Yamamoto Y."/>
            <person name="Fujita K."/>
            <person name="Isono K."/>
            <person name="Choi S."/>
            <person name="Ohtsubo E."/>
            <person name="Baba T."/>
            <person name="Wanner B.L."/>
            <person name="Mori H."/>
            <person name="Horiuchi T."/>
        </authorList>
    </citation>
    <scope>NUCLEOTIDE SEQUENCE [LARGE SCALE GENOMIC DNA]</scope>
    <source>
        <strain>K12 / W3110 / ATCC 27325 / DSM 5911</strain>
    </source>
</reference>
<reference key="5">
    <citation type="journal article" date="1977" name="J. Biol. Chem.">
        <title>Inducible membrane-bound L-lactate dehydrogenase from Escherichia coli. Purification and properties.</title>
        <authorList>
            <person name="Futai M."/>
            <person name="Kimura H."/>
        </authorList>
    </citation>
    <scope>FUNCTION</scope>
    <scope>CATALYTIC ACTIVITY</scope>
    <scope>COFACTOR</scope>
    <scope>SUBSTRATE SPECIFICITY</scope>
    <scope>BIOPHYSICOCHEMICAL PROPERTIES</scope>
    <scope>INDUCTION</scope>
    <scope>SUBUNIT</scope>
    <scope>SUBCELLULAR LOCATION</scope>
</reference>
<accession>P33232</accession>
<accession>Q2M7R9</accession>
<protein>
    <recommendedName>
        <fullName evidence="1">L-lactate dehydrogenase</fullName>
        <ecNumber evidence="1">1.1.-.-</ecNumber>
    </recommendedName>
</protein>
<name>LLDD_ECOLI</name>
<sequence>MIISAASDYRAAAQRILPPFLFHYMDGGAYSEYTLRRNVEDLSEVALRQRILKNMSDLSLETTLFNEKLSMPVALAPVGLCGMYARRGEVQAAKAADAHGIPFTLSTVSVCPIEEVAPAIKRPMWFQLYVLRDRGFMRNALERAKAAGCSTLVFTVDMPTPGARYRDAHSGMSGPNAAMRRYLQAVTHPQWAWDVGLNGRPHDLGNISAYLGKPTGLEDYIGWLGNNFDPSISWKDLEWIRDFWDGPMVIKGILDPEDARDAVRFGADGIVVSNHGGRQLDGVLSSARALPAIADAVKGDIAILADSGIRNGLDVVRMIALGADTVLLGRAFLYALATAGQAGVANLLNLIEKEMKVAMTLTGAKSISEITQDSLVQGLGKELPAALAPMAKGNAA</sequence>
<gene>
    <name evidence="1" type="primary">lldD</name>
    <name type="synonym">lctD</name>
    <name type="ordered locus">b3605</name>
    <name type="ordered locus">JW3580</name>
</gene>
<feature type="chain" id="PRO_0000206335" description="L-lactate dehydrogenase">
    <location>
        <begin position="1"/>
        <end position="396"/>
    </location>
</feature>
<feature type="domain" description="FMN hydroxy acid dehydrogenase" evidence="1">
    <location>
        <begin position="1"/>
        <end position="380"/>
    </location>
</feature>
<feature type="active site" description="Proton acceptor" evidence="1">
    <location>
        <position position="275"/>
    </location>
</feature>
<feature type="binding site" evidence="1">
    <location>
        <position position="24"/>
    </location>
    <ligand>
        <name>substrate</name>
    </ligand>
</feature>
<feature type="binding site" evidence="1">
    <location>
        <position position="106"/>
    </location>
    <ligand>
        <name>FMN</name>
        <dbReference type="ChEBI" id="CHEBI:58210"/>
    </ligand>
</feature>
<feature type="binding site" evidence="1">
    <location>
        <position position="127"/>
    </location>
    <ligand>
        <name>FMN</name>
        <dbReference type="ChEBI" id="CHEBI:58210"/>
    </ligand>
</feature>
<feature type="binding site" evidence="1">
    <location>
        <position position="129"/>
    </location>
    <ligand>
        <name>substrate</name>
    </ligand>
</feature>
<feature type="binding site" evidence="1">
    <location>
        <position position="155"/>
    </location>
    <ligand>
        <name>FMN</name>
        <dbReference type="ChEBI" id="CHEBI:58210"/>
    </ligand>
</feature>
<feature type="binding site" evidence="1">
    <location>
        <position position="164"/>
    </location>
    <ligand>
        <name>substrate</name>
    </ligand>
</feature>
<feature type="binding site" evidence="1">
    <location>
        <position position="251"/>
    </location>
    <ligand>
        <name>FMN</name>
        <dbReference type="ChEBI" id="CHEBI:58210"/>
    </ligand>
</feature>
<feature type="binding site" evidence="1">
    <location>
        <position position="278"/>
    </location>
    <ligand>
        <name>substrate</name>
    </ligand>
</feature>
<feature type="binding site" evidence="1">
    <location>
        <begin position="306"/>
        <end position="330"/>
    </location>
    <ligand>
        <name>FMN</name>
        <dbReference type="ChEBI" id="CHEBI:58210"/>
    </ligand>
</feature>
<dbReference type="EC" id="1.1.-.-" evidence="1"/>
<dbReference type="EMBL" id="L13970">
    <property type="protein sequence ID" value="AAA03585.1"/>
    <property type="molecule type" value="Unassigned_DNA"/>
</dbReference>
<dbReference type="EMBL" id="U00039">
    <property type="protein sequence ID" value="AAB18582.1"/>
    <property type="molecule type" value="Genomic_DNA"/>
</dbReference>
<dbReference type="EMBL" id="U00096">
    <property type="protein sequence ID" value="AAC76629.1"/>
    <property type="molecule type" value="Genomic_DNA"/>
</dbReference>
<dbReference type="EMBL" id="AP009048">
    <property type="protein sequence ID" value="BAE77687.1"/>
    <property type="molecule type" value="Genomic_DNA"/>
</dbReference>
<dbReference type="PIR" id="C49904">
    <property type="entry name" value="C49904"/>
</dbReference>
<dbReference type="RefSeq" id="NP_418062.1">
    <property type="nucleotide sequence ID" value="NC_000913.3"/>
</dbReference>
<dbReference type="RefSeq" id="WP_000586962.1">
    <property type="nucleotide sequence ID" value="NZ_SSZK01000022.1"/>
</dbReference>
<dbReference type="SMR" id="P33232"/>
<dbReference type="BioGRID" id="4262561">
    <property type="interactions" value="57"/>
</dbReference>
<dbReference type="DIP" id="DIP-10108N"/>
<dbReference type="FunCoup" id="P33232">
    <property type="interactions" value="492"/>
</dbReference>
<dbReference type="IntAct" id="P33232">
    <property type="interactions" value="16"/>
</dbReference>
<dbReference type="MINT" id="P33232"/>
<dbReference type="STRING" id="511145.b3605"/>
<dbReference type="jPOST" id="P33232"/>
<dbReference type="PaxDb" id="511145-b3605"/>
<dbReference type="EnsemblBacteria" id="AAC76629">
    <property type="protein sequence ID" value="AAC76629"/>
    <property type="gene ID" value="b3605"/>
</dbReference>
<dbReference type="GeneID" id="948121"/>
<dbReference type="KEGG" id="ecj:JW3580"/>
<dbReference type="KEGG" id="eco:b3605"/>
<dbReference type="KEGG" id="ecoc:C3026_19550"/>
<dbReference type="PATRIC" id="fig|1411691.4.peg.3101"/>
<dbReference type="EchoBASE" id="EB1906"/>
<dbReference type="eggNOG" id="COG1304">
    <property type="taxonomic scope" value="Bacteria"/>
</dbReference>
<dbReference type="HOGENOM" id="CLU_020639_0_0_6"/>
<dbReference type="InParanoid" id="P33232"/>
<dbReference type="OMA" id="RIWFRPK"/>
<dbReference type="OrthoDB" id="9770452at2"/>
<dbReference type="PhylomeDB" id="P33232"/>
<dbReference type="BioCyc" id="EcoCyc:L-LACTDEHYDROGFMN-MONOMER"/>
<dbReference type="BioCyc" id="MetaCyc:L-LACTDEHYDROGFMN-MONOMER"/>
<dbReference type="SABIO-RK" id="P33232"/>
<dbReference type="PRO" id="PR:P33232"/>
<dbReference type="Proteomes" id="UP000000625">
    <property type="component" value="Chromosome"/>
</dbReference>
<dbReference type="GO" id="GO:0005886">
    <property type="term" value="C:plasma membrane"/>
    <property type="evidence" value="ECO:0000314"/>
    <property type="project" value="EcoCyc"/>
</dbReference>
<dbReference type="GO" id="GO:0010181">
    <property type="term" value="F:FMN binding"/>
    <property type="evidence" value="ECO:0000314"/>
    <property type="project" value="EcoCyc"/>
</dbReference>
<dbReference type="GO" id="GO:0004459">
    <property type="term" value="F:L-lactate dehydrogenase activity"/>
    <property type="evidence" value="ECO:0000314"/>
    <property type="project" value="EcoCyc"/>
</dbReference>
<dbReference type="GO" id="GO:0009060">
    <property type="term" value="P:aerobic respiration"/>
    <property type="evidence" value="ECO:0000270"/>
    <property type="project" value="EcoCyc"/>
</dbReference>
<dbReference type="GO" id="GO:0042355">
    <property type="term" value="P:L-fucose catabolic process"/>
    <property type="evidence" value="ECO:0000270"/>
    <property type="project" value="EcoCyc"/>
</dbReference>
<dbReference type="GO" id="GO:0006089">
    <property type="term" value="P:lactate metabolic process"/>
    <property type="evidence" value="ECO:0000315"/>
    <property type="project" value="EcoCyc"/>
</dbReference>
<dbReference type="CDD" id="cd02809">
    <property type="entry name" value="alpha_hydroxyacid_oxid_FMN"/>
    <property type="match status" value="1"/>
</dbReference>
<dbReference type="FunFam" id="3.20.20.70:FF:000029">
    <property type="entry name" value="L-lactate dehydrogenase"/>
    <property type="match status" value="1"/>
</dbReference>
<dbReference type="Gene3D" id="3.20.20.70">
    <property type="entry name" value="Aldolase class I"/>
    <property type="match status" value="1"/>
</dbReference>
<dbReference type="HAMAP" id="MF_01559">
    <property type="entry name" value="L_lact_dehydr"/>
    <property type="match status" value="1"/>
</dbReference>
<dbReference type="InterPro" id="IPR013785">
    <property type="entry name" value="Aldolase_TIM"/>
</dbReference>
<dbReference type="InterPro" id="IPR012133">
    <property type="entry name" value="Alpha-hydoxy_acid_DH_FMN"/>
</dbReference>
<dbReference type="InterPro" id="IPR000262">
    <property type="entry name" value="FMN-dep_DH"/>
</dbReference>
<dbReference type="InterPro" id="IPR037396">
    <property type="entry name" value="FMN_HAD"/>
</dbReference>
<dbReference type="InterPro" id="IPR008259">
    <property type="entry name" value="FMN_hydac_DH_AS"/>
</dbReference>
<dbReference type="InterPro" id="IPR020920">
    <property type="entry name" value="LldD"/>
</dbReference>
<dbReference type="NCBIfam" id="NF033901">
    <property type="entry name" value="L_lactate_LldD"/>
    <property type="match status" value="1"/>
</dbReference>
<dbReference type="NCBIfam" id="NF008398">
    <property type="entry name" value="PRK11197.1"/>
    <property type="match status" value="1"/>
</dbReference>
<dbReference type="PANTHER" id="PTHR10578:SF85">
    <property type="entry name" value="L-LACTATE DEHYDROGENASE"/>
    <property type="match status" value="1"/>
</dbReference>
<dbReference type="PANTHER" id="PTHR10578">
    <property type="entry name" value="S -2-HYDROXY-ACID OXIDASE-RELATED"/>
    <property type="match status" value="1"/>
</dbReference>
<dbReference type="Pfam" id="PF01070">
    <property type="entry name" value="FMN_dh"/>
    <property type="match status" value="1"/>
</dbReference>
<dbReference type="PIRSF" id="PIRSF000138">
    <property type="entry name" value="Al-hdrx_acd_dh"/>
    <property type="match status" value="1"/>
</dbReference>
<dbReference type="SUPFAM" id="SSF51395">
    <property type="entry name" value="FMN-linked oxidoreductases"/>
    <property type="match status" value="1"/>
</dbReference>
<dbReference type="PROSITE" id="PS00557">
    <property type="entry name" value="FMN_HYDROXY_ACID_DH_1"/>
    <property type="match status" value="1"/>
</dbReference>
<dbReference type="PROSITE" id="PS51349">
    <property type="entry name" value="FMN_HYDROXY_ACID_DH_2"/>
    <property type="match status" value="1"/>
</dbReference>
<organism>
    <name type="scientific">Escherichia coli (strain K12)</name>
    <dbReference type="NCBI Taxonomy" id="83333"/>
    <lineage>
        <taxon>Bacteria</taxon>
        <taxon>Pseudomonadati</taxon>
        <taxon>Pseudomonadota</taxon>
        <taxon>Gammaproteobacteria</taxon>
        <taxon>Enterobacterales</taxon>
        <taxon>Enterobacteriaceae</taxon>
        <taxon>Escherichia</taxon>
    </lineage>
</organism>
<comment type="function">
    <text evidence="2 3">Catalyzes the conversion of L-lactate to pyruvate. Seems to be a primary dehydrogenase in the respiratory chain. To a lesser extent, can also oxidize DL-alpha-hydroxybutyrate, but not D-lactate.</text>
</comment>
<comment type="catalytic activity">
    <reaction evidence="1 2">
        <text>(S)-lactate + A = pyruvate + AH2</text>
        <dbReference type="Rhea" id="RHEA:45816"/>
        <dbReference type="ChEBI" id="CHEBI:13193"/>
        <dbReference type="ChEBI" id="CHEBI:15361"/>
        <dbReference type="ChEBI" id="CHEBI:16651"/>
        <dbReference type="ChEBI" id="CHEBI:17499"/>
    </reaction>
</comment>
<comment type="cofactor">
    <cofactor evidence="1 2">
        <name>FMN</name>
        <dbReference type="ChEBI" id="CHEBI:58210"/>
    </cofactor>
</comment>
<comment type="activity regulation">
    <text>Is activated by 2-fold in the presence of high concentrations of sodium and potassium ions. Is almost completely inhibited by a high concentration of pyruvate (10 mM).</text>
</comment>
<comment type="biophysicochemical properties">
    <kinetics>
        <KM evidence="2">120 uM for L-lactate</KM>
        <KM evidence="2">770 uM for DL-alpha-hydroxybutyrate</KM>
    </kinetics>
    <phDependence>
        <text evidence="2">Optimum pH is 8-9.</text>
    </phDependence>
</comment>
<comment type="subunit">
    <text evidence="2">Forms homooligomers.</text>
</comment>
<comment type="subcellular location">
    <subcellularLocation>
        <location evidence="1 2">Cell inner membrane</location>
        <topology evidence="1 2">Peripheral membrane protein</topology>
    </subcellularLocation>
</comment>
<comment type="induction">
    <text evidence="2 3">Is induced by aerobic growth on L-lactate, but not by aerobic growth on D-lactate or glycerol or by anaerobic growth on glucose.</text>
</comment>
<comment type="disruption phenotype">
    <text evidence="3">Cells lacking this gene lose the ability to grow on L-lactate as the sole source of carbon and energy, but can still utilize D-lactate.</text>
</comment>
<comment type="similarity">
    <text evidence="1">Belongs to the FMN-dependent alpha-hydroxy acid dehydrogenase family.</text>
</comment>
<proteinExistence type="evidence at protein level"/>
<evidence type="ECO:0000255" key="1">
    <source>
        <dbReference type="HAMAP-Rule" id="MF_01559"/>
    </source>
</evidence>
<evidence type="ECO:0000269" key="2">
    <source>
    </source>
</evidence>
<evidence type="ECO:0000269" key="3">
    <source>
    </source>
</evidence>